<protein>
    <recommendedName>
        <fullName>Kinesin-like protein KIF1C</fullName>
    </recommendedName>
</protein>
<gene>
    <name type="primary">KIF1C</name>
    <name type="synonym">KIAA0706</name>
</gene>
<accession>O43896</accession>
<accession>D3DTL6</accession>
<accession>O75186</accession>
<accession>Q5U618</accession>
<name>KIF1C_HUMAN</name>
<reference key="1">
    <citation type="journal article" date="1998" name="J. Biol. Chem.">
        <title>Characterization of KIF1C, a new kinesin-like protein involved in vesicle transport from the Golgi apparatus to the endoplasmic reticulum.</title>
        <authorList>
            <person name="Dorner C."/>
            <person name="Ciossek T."/>
            <person name="Mueller S."/>
            <person name="Moeller N.P.H."/>
            <person name="Ullrich A."/>
            <person name="Lammers R."/>
        </authorList>
    </citation>
    <scope>NUCLEOTIDE SEQUENCE [MRNA]</scope>
    <scope>FUNCTION</scope>
    <scope>PHOSPHORYLATION</scope>
    <scope>TISSUE SPECIFICITY</scope>
    <source>
        <tissue>Hippocampus</tissue>
    </source>
</reference>
<reference key="2">
    <citation type="journal article" date="1998" name="DNA Res.">
        <title>Prediction of the coding sequences of unidentified human genes. X. The complete sequences of 100 new cDNA clones from brain which can code for large proteins in vitro.</title>
        <authorList>
            <person name="Ishikawa K."/>
            <person name="Nagase T."/>
            <person name="Suyama M."/>
            <person name="Miyajima N."/>
            <person name="Tanaka A."/>
            <person name="Kotani H."/>
            <person name="Nomura N."/>
            <person name="Ohara O."/>
        </authorList>
    </citation>
    <scope>NUCLEOTIDE SEQUENCE [LARGE SCALE MRNA]</scope>
    <source>
        <tissue>Brain</tissue>
    </source>
</reference>
<reference key="3">
    <citation type="submission" date="2005-09" db="EMBL/GenBank/DDBJ databases">
        <authorList>
            <person name="Mural R.J."/>
            <person name="Istrail S."/>
            <person name="Sutton G.G."/>
            <person name="Florea L."/>
            <person name="Halpern A.L."/>
            <person name="Mobarry C.M."/>
            <person name="Lippert R."/>
            <person name="Walenz B."/>
            <person name="Shatkay H."/>
            <person name="Dew I."/>
            <person name="Miller J.R."/>
            <person name="Flanigan M.J."/>
            <person name="Edwards N.J."/>
            <person name="Bolanos R."/>
            <person name="Fasulo D."/>
            <person name="Halldorsson B.V."/>
            <person name="Hannenhalli S."/>
            <person name="Turner R."/>
            <person name="Yooseph S."/>
            <person name="Lu F."/>
            <person name="Nusskern D.R."/>
            <person name="Shue B.C."/>
            <person name="Zheng X.H."/>
            <person name="Zhong F."/>
            <person name="Delcher A.L."/>
            <person name="Huson D.H."/>
            <person name="Kravitz S.A."/>
            <person name="Mouchard L."/>
            <person name="Reinert K."/>
            <person name="Remington K.A."/>
            <person name="Clark A.G."/>
            <person name="Waterman M.S."/>
            <person name="Eichler E.E."/>
            <person name="Adams M.D."/>
            <person name="Hunkapiller M.W."/>
            <person name="Myers E.W."/>
            <person name="Venter J.C."/>
        </authorList>
    </citation>
    <scope>NUCLEOTIDE SEQUENCE [LARGE SCALE GENOMIC DNA]</scope>
</reference>
<reference key="4">
    <citation type="journal article" date="2004" name="Genome Res.">
        <title>The status, quality, and expansion of the NIH full-length cDNA project: the Mammalian Gene Collection (MGC).</title>
        <authorList>
            <consortium name="The MGC Project Team"/>
        </authorList>
    </citation>
    <scope>NUCLEOTIDE SEQUENCE [LARGE SCALE MRNA]</scope>
    <source>
        <tissue>Testis</tissue>
    </source>
</reference>
<reference key="5">
    <citation type="journal article" date="2006" name="Cell">
        <title>Global, in vivo, and site-specific phosphorylation dynamics in signaling networks.</title>
        <authorList>
            <person name="Olsen J.V."/>
            <person name="Blagoev B."/>
            <person name="Gnad F."/>
            <person name="Macek B."/>
            <person name="Kumar C."/>
            <person name="Mortensen P."/>
            <person name="Mann M."/>
        </authorList>
    </citation>
    <scope>PHOSPHORYLATION [LARGE SCALE ANALYSIS] AT SER-1033</scope>
    <scope>IDENTIFICATION BY MASS SPECTROMETRY [LARGE SCALE ANALYSIS]</scope>
    <source>
        <tissue>Cervix carcinoma</tissue>
    </source>
</reference>
<reference key="6">
    <citation type="journal article" date="2006" name="Nat. Biotechnol.">
        <title>A probability-based approach for high-throughput protein phosphorylation analysis and site localization.</title>
        <authorList>
            <person name="Beausoleil S.A."/>
            <person name="Villen J."/>
            <person name="Gerber S.A."/>
            <person name="Rush J."/>
            <person name="Gygi S.P."/>
        </authorList>
    </citation>
    <scope>PHOSPHORYLATION [LARGE SCALE ANALYSIS] AT SER-494</scope>
    <scope>IDENTIFICATION BY MASS SPECTROMETRY [LARGE SCALE ANALYSIS]</scope>
    <source>
        <tissue>Cervix carcinoma</tissue>
    </source>
</reference>
<reference key="7">
    <citation type="journal article" date="2008" name="Proc. Natl. Acad. Sci. U.S.A.">
        <title>A quantitative atlas of mitotic phosphorylation.</title>
        <authorList>
            <person name="Dephoure N."/>
            <person name="Zhou C."/>
            <person name="Villen J."/>
            <person name="Beausoleil S.A."/>
            <person name="Bakalarski C.E."/>
            <person name="Elledge S.J."/>
            <person name="Gygi S.P."/>
        </authorList>
    </citation>
    <scope>PHOSPHORYLATION [LARGE SCALE ANALYSIS] AT THR-1083 AND SER-1092</scope>
    <scope>IDENTIFICATION BY MASS SPECTROMETRY [LARGE SCALE ANALYSIS]</scope>
    <source>
        <tissue>Cervix carcinoma</tissue>
    </source>
</reference>
<reference key="8">
    <citation type="journal article" date="2009" name="Sci. Signal.">
        <title>Quantitative phosphoproteomic analysis of T cell receptor signaling reveals system-wide modulation of protein-protein interactions.</title>
        <authorList>
            <person name="Mayya V."/>
            <person name="Lundgren D.H."/>
            <person name="Hwang S.-I."/>
            <person name="Rezaul K."/>
            <person name="Wu L."/>
            <person name="Eng J.K."/>
            <person name="Rodionov V."/>
            <person name="Han D.K."/>
        </authorList>
    </citation>
    <scope>PHOSPHORYLATION [LARGE SCALE ANALYSIS] AT SER-1092</scope>
    <scope>IDENTIFICATION BY MASS SPECTROMETRY [LARGE SCALE ANALYSIS]</scope>
    <source>
        <tissue>Leukemic T-cell</tissue>
    </source>
</reference>
<reference key="9">
    <citation type="journal article" date="2010" name="Sci. Signal.">
        <title>Quantitative phosphoproteomics reveals widespread full phosphorylation site occupancy during mitosis.</title>
        <authorList>
            <person name="Olsen J.V."/>
            <person name="Vermeulen M."/>
            <person name="Santamaria A."/>
            <person name="Kumar C."/>
            <person name="Miller M.L."/>
            <person name="Jensen L.J."/>
            <person name="Gnad F."/>
            <person name="Cox J."/>
            <person name="Jensen T.S."/>
            <person name="Nigg E.A."/>
            <person name="Brunak S."/>
            <person name="Mann M."/>
        </authorList>
    </citation>
    <scope>PHOSPHORYLATION [LARGE SCALE ANALYSIS] AT SER-494</scope>
    <scope>IDENTIFICATION BY MASS SPECTROMETRY [LARGE SCALE ANALYSIS]</scope>
    <source>
        <tissue>Cervix carcinoma</tissue>
    </source>
</reference>
<reference key="10">
    <citation type="journal article" date="2011" name="BMC Syst. Biol.">
        <title>Initial characterization of the human central proteome.</title>
        <authorList>
            <person name="Burkard T.R."/>
            <person name="Planyavsky M."/>
            <person name="Kaupe I."/>
            <person name="Breitwieser F.P."/>
            <person name="Buerckstuemmer T."/>
            <person name="Bennett K.L."/>
            <person name="Superti-Furga G."/>
            <person name="Colinge J."/>
        </authorList>
    </citation>
    <scope>IDENTIFICATION BY MASS SPECTROMETRY [LARGE SCALE ANALYSIS]</scope>
</reference>
<reference key="11">
    <citation type="journal article" date="2011" name="Sci. Signal.">
        <title>System-wide temporal characterization of the proteome and phosphoproteome of human embryonic stem cell differentiation.</title>
        <authorList>
            <person name="Rigbolt K.T."/>
            <person name="Prokhorova T.A."/>
            <person name="Akimov V."/>
            <person name="Henningsen J."/>
            <person name="Johansen P.T."/>
            <person name="Kratchmarova I."/>
            <person name="Kassem M."/>
            <person name="Mann M."/>
            <person name="Olsen J.V."/>
            <person name="Blagoev B."/>
        </authorList>
    </citation>
    <scope>PHOSPHORYLATION [LARGE SCALE ANALYSIS] AT SER-674 AND SER-676</scope>
    <scope>IDENTIFICATION BY MASS SPECTROMETRY [LARGE SCALE ANALYSIS]</scope>
</reference>
<reference key="12">
    <citation type="journal article" date="2013" name="J. Proteome Res.">
        <title>Toward a comprehensive characterization of a human cancer cell phosphoproteome.</title>
        <authorList>
            <person name="Zhou H."/>
            <person name="Di Palma S."/>
            <person name="Preisinger C."/>
            <person name="Peng M."/>
            <person name="Polat A.N."/>
            <person name="Heck A.J."/>
            <person name="Mohammed S."/>
        </authorList>
    </citation>
    <scope>PHOSPHORYLATION [LARGE SCALE ANALYSIS] AT SER-295; SER-494 AND SER-915</scope>
    <scope>IDENTIFICATION BY MASS SPECTROMETRY [LARGE SCALE ANALYSIS]</scope>
    <source>
        <tissue>Cervix carcinoma</tissue>
        <tissue>Erythroleukemia</tissue>
    </source>
</reference>
<reference key="13">
    <citation type="journal article" date="2014" name="J. Proteomics">
        <title>An enzyme assisted RP-RPLC approach for in-depth analysis of human liver phosphoproteome.</title>
        <authorList>
            <person name="Bian Y."/>
            <person name="Song C."/>
            <person name="Cheng K."/>
            <person name="Dong M."/>
            <person name="Wang F."/>
            <person name="Huang J."/>
            <person name="Sun D."/>
            <person name="Wang L."/>
            <person name="Ye M."/>
            <person name="Zou H."/>
        </authorList>
    </citation>
    <scope>PHOSPHORYLATION [LARGE SCALE ANALYSIS] AT SER-915</scope>
    <scope>IDENTIFICATION BY MASS SPECTROMETRY [LARGE SCALE ANALYSIS]</scope>
    <source>
        <tissue>Liver</tissue>
    </source>
</reference>
<reference key="14">
    <citation type="journal article" date="2014" name="Mol. Cell. Proteomics">
        <title>Immunoaffinity enrichment and mass spectrometry analysis of protein methylation.</title>
        <authorList>
            <person name="Guo A."/>
            <person name="Gu H."/>
            <person name="Zhou J."/>
            <person name="Mulhern D."/>
            <person name="Wang Y."/>
            <person name="Lee K.A."/>
            <person name="Yang V."/>
            <person name="Aguiar M."/>
            <person name="Kornhauser J."/>
            <person name="Jia X."/>
            <person name="Ren J."/>
            <person name="Beausoleil S.A."/>
            <person name="Silva J.C."/>
            <person name="Vemulapalli V."/>
            <person name="Bedford M.T."/>
            <person name="Comb M.J."/>
        </authorList>
    </citation>
    <scope>METHYLATION [LARGE SCALE ANALYSIS] AT ARG-1041</scope>
    <scope>IDENTIFICATION BY MASS SPECTROMETRY [LARGE SCALE ANALYSIS]</scope>
    <source>
        <tissue>Colon carcinoma</tissue>
    </source>
</reference>
<reference key="15">
    <citation type="journal article" date="2014" name="Science">
        <title>Exome sequencing links corticospinal motor neuron disease to common neurodegenerative disorders.</title>
        <authorList>
            <person name="Novarino G."/>
            <person name="Fenstermaker A.G."/>
            <person name="Zaki M.S."/>
            <person name="Hofree M."/>
            <person name="Silhavy J.L."/>
            <person name="Heiberg A.D."/>
            <person name="Abdellateef M."/>
            <person name="Rosti B."/>
            <person name="Scott E."/>
            <person name="Mansour L."/>
            <person name="Masri A."/>
            <person name="Kayserili H."/>
            <person name="Al-Aama J.Y."/>
            <person name="Abdel-Salam G.M."/>
            <person name="Karminejad A."/>
            <person name="Kara M."/>
            <person name="Kara B."/>
            <person name="Bozorgmehri B."/>
            <person name="Ben-Omran T."/>
            <person name="Mojahedi F."/>
            <person name="Mahmoud I.G."/>
            <person name="Bouslam N."/>
            <person name="Bouhouche A."/>
            <person name="Benomar A."/>
            <person name="Hanein S."/>
            <person name="Raymond L."/>
            <person name="Forlani S."/>
            <person name="Mascaro M."/>
            <person name="Selim L."/>
            <person name="Shehata N."/>
            <person name="Al-Allawi N."/>
            <person name="Bindu P.S."/>
            <person name="Azam M."/>
            <person name="Gunel M."/>
            <person name="Caglayan A."/>
            <person name="Bilguvar K."/>
            <person name="Tolun A."/>
            <person name="Issa M.Y."/>
            <person name="Schroth J."/>
            <person name="Spencer E.G."/>
            <person name="Rosti R.O."/>
            <person name="Akizu N."/>
            <person name="Vaux K.K."/>
            <person name="Johansen A."/>
            <person name="Koh A.A."/>
            <person name="Megahed H."/>
            <person name="Durr A."/>
            <person name="Brice A."/>
            <person name="Stevanin G."/>
            <person name="Gabriel S.B."/>
            <person name="Ideker T."/>
            <person name="Gleeson J.G."/>
        </authorList>
    </citation>
    <scope>INTERACTION WITH BICD2</scope>
    <scope>INVOLVEMENT IN SPAX2</scope>
</reference>
<reference key="16">
    <citation type="submission" date="2006-02" db="PDB data bank">
        <title>Crystal structure of the FHA domain of human kinesin family member C.</title>
        <authorList>
            <consortium name="Structural genomics consortium (SGC)"/>
        </authorList>
    </citation>
    <scope>X-RAY CRYSTALLOGRAPHY (2.6 ANGSTROMS) OF 498-599</scope>
</reference>
<reference key="17">
    <citation type="journal article" date="2014" name="J. Med. Genet.">
        <title>KIF1C mutations in two families with hereditary spastic paraparesis and cerebellar dysfunction.</title>
        <authorList>
            <person name="Dor T."/>
            <person name="Cinnamon Y."/>
            <person name="Raymond L."/>
            <person name="Shaag A."/>
            <person name="Bouslam N."/>
            <person name="Bouhouche A."/>
            <person name="Gaussen M."/>
            <person name="Meyer V."/>
            <person name="Durr A."/>
            <person name="Brice A."/>
            <person name="Benomar A."/>
            <person name="Stevanin G."/>
            <person name="Schuelke M."/>
            <person name="Edvardson S."/>
        </authorList>
    </citation>
    <scope>VARIANT SPAX2 TRP-169</scope>
</reference>
<feature type="chain" id="PRO_0000125410" description="Kinesin-like protein KIF1C">
    <location>
        <begin position="1"/>
        <end position="1103"/>
    </location>
</feature>
<feature type="domain" description="Kinesin motor" evidence="2">
    <location>
        <begin position="5"/>
        <end position="348"/>
    </location>
</feature>
<feature type="domain" description="FHA">
    <location>
        <begin position="523"/>
        <end position="590"/>
    </location>
</feature>
<feature type="region of interest" description="Disordered" evidence="3">
    <location>
        <begin position="400"/>
        <end position="438"/>
    </location>
</feature>
<feature type="region of interest" description="Disordered" evidence="3">
    <location>
        <begin position="808"/>
        <end position="828"/>
    </location>
</feature>
<feature type="region of interest" description="Disordered" evidence="3">
    <location>
        <begin position="874"/>
        <end position="924"/>
    </location>
</feature>
<feature type="region of interest" description="Disordered" evidence="3">
    <location>
        <begin position="950"/>
        <end position="1103"/>
    </location>
</feature>
<feature type="coiled-coil region" evidence="1">
    <location>
        <begin position="359"/>
        <end position="388"/>
    </location>
</feature>
<feature type="coiled-coil region" evidence="1">
    <location>
        <begin position="438"/>
        <end position="479"/>
    </location>
</feature>
<feature type="coiled-coil region" evidence="1">
    <location>
        <begin position="633"/>
        <end position="674"/>
    </location>
</feature>
<feature type="coiled-coil region" evidence="1">
    <location>
        <begin position="828"/>
        <end position="872"/>
    </location>
</feature>
<feature type="compositionally biased region" description="Gly residues" evidence="3">
    <location>
        <begin position="813"/>
        <end position="822"/>
    </location>
</feature>
<feature type="compositionally biased region" description="Low complexity" evidence="3">
    <location>
        <begin position="893"/>
        <end position="910"/>
    </location>
</feature>
<feature type="compositionally biased region" description="Gly residues" evidence="3">
    <location>
        <begin position="953"/>
        <end position="962"/>
    </location>
</feature>
<feature type="compositionally biased region" description="Basic residues" evidence="3">
    <location>
        <begin position="1021"/>
        <end position="1031"/>
    </location>
</feature>
<feature type="compositionally biased region" description="Pro residues" evidence="3">
    <location>
        <begin position="1062"/>
        <end position="1083"/>
    </location>
</feature>
<feature type="compositionally biased region" description="Basic and acidic residues" evidence="3">
    <location>
        <begin position="1092"/>
        <end position="1103"/>
    </location>
</feature>
<feature type="binding site" evidence="2">
    <location>
        <begin position="97"/>
        <end position="104"/>
    </location>
    <ligand>
        <name>ATP</name>
        <dbReference type="ChEBI" id="CHEBI:30616"/>
    </ligand>
</feature>
<feature type="modified residue" description="Phosphoserine" evidence="14">
    <location>
        <position position="295"/>
    </location>
</feature>
<feature type="modified residue" description="Phosphoserine" evidence="8 12 14">
    <location>
        <position position="494"/>
    </location>
</feature>
<feature type="modified residue" description="Phosphoserine" evidence="13">
    <location>
        <position position="674"/>
    </location>
</feature>
<feature type="modified residue" description="Phosphoserine" evidence="13">
    <location>
        <position position="676"/>
    </location>
</feature>
<feature type="modified residue" description="Phosphoserine" evidence="14 16">
    <location>
        <position position="915"/>
    </location>
</feature>
<feature type="modified residue" description="Phosphoserine" evidence="9">
    <location>
        <position position="1033"/>
    </location>
</feature>
<feature type="modified residue" description="Omega-N-methylarginine" evidence="15">
    <location>
        <position position="1041"/>
    </location>
</feature>
<feature type="modified residue" description="Phosphothreonine" evidence="10">
    <location>
        <position position="1083"/>
    </location>
</feature>
<feature type="modified residue" description="Phosphoserine" evidence="10 11">
    <location>
        <position position="1092"/>
    </location>
</feature>
<feature type="sequence variant" id="VAR_070937" description="In SPAX2; dbSNP:rs587777198." evidence="4">
    <original>R</original>
    <variation>W</variation>
    <location>
        <position position="169"/>
    </location>
</feature>
<feature type="sequence conflict" description="In Ref. 1; AAC52117." evidence="7" ref="1">
    <original>R</original>
    <variation>Q</variation>
    <location>
        <position position="669"/>
    </location>
</feature>
<feature type="sequence conflict" description="In Ref. 1; AAC52117." evidence="7" ref="1">
    <original>SGGRGGGL</original>
    <variation>LWGPGRGV</variation>
    <location>
        <begin position="955"/>
        <end position="962"/>
    </location>
</feature>
<feature type="sequence conflict" description="In Ref. 1; AAC52117." evidence="7" ref="1">
    <original>KL</original>
    <variation>NV</variation>
    <location>
        <begin position="976"/>
        <end position="977"/>
    </location>
</feature>
<feature type="strand" evidence="17">
    <location>
        <begin position="500"/>
        <end position="503"/>
    </location>
</feature>
<feature type="strand" evidence="17">
    <location>
        <begin position="510"/>
        <end position="512"/>
    </location>
</feature>
<feature type="strand" evidence="17">
    <location>
        <begin position="515"/>
        <end position="517"/>
    </location>
</feature>
<feature type="strand" evidence="17">
    <location>
        <begin position="520"/>
        <end position="529"/>
    </location>
</feature>
<feature type="strand" evidence="17">
    <location>
        <begin position="531"/>
        <end position="533"/>
    </location>
</feature>
<feature type="strand" evidence="17">
    <location>
        <begin position="541"/>
        <end position="550"/>
    </location>
</feature>
<feature type="strand" evidence="17">
    <location>
        <begin position="556"/>
        <end position="562"/>
    </location>
</feature>
<feature type="strand" evidence="17">
    <location>
        <begin position="568"/>
        <end position="570"/>
    </location>
</feature>
<feature type="strand" evidence="17">
    <location>
        <begin position="586"/>
        <end position="589"/>
    </location>
</feature>
<feature type="turn" evidence="17">
    <location>
        <begin position="590"/>
        <end position="592"/>
    </location>
</feature>
<feature type="strand" evidence="17">
    <location>
        <begin position="593"/>
        <end position="598"/>
    </location>
</feature>
<sequence length="1103" mass="122947">MAGASVKVAVRVRPFNARETSQDAKCVVSMQGNTTSIINPKQSKDAPKSFTFDYSYWSHTSTEDPQFASQQQVYRDIGEEMLLHAFEGYNVCIFAYGQTGAGKSYTMMGRQEPGQQGIVPQLCEDLFSRVSENQSAQLSYSVEVSYMEIYCERVRDLLNPKSRGSLRVREHPILGPYVQDLSKLAVTSYADIADLMDCGNKARTVAATNMNETSSRSHAVFTIVFTQRCHDQLTGLDSEKVSKISLVDLAGSERADSSGARGMRLKEGANINKSLTTLGKVISALADMQSKKRKSDFIPYRDSVLTWLLKENLGGNSRTAMIAALSPADINYEETLSTLRYADRTKQIRCNAIINEDPNARLIRELQEEVARLRELLMAQGLSASALEGLKTEEGSVRGALPAVSSPPAPVSPSSPTTHNGELEPSFSPNTESQIGPEEAMERLQETEKIIAELNETWEEKLRKTEALRMEREALLAEMGVAVREDGGTVGVFSPKKTPHLVNLNEDPLMSECLLYHIKDGVTRVGQVDMDIKLTGQFIREQHCLFRSIPQPDGEVVVTLEPCEGAETYVNGKLVTEPLVLKSGNRIVMGKNHVFRFNHPEQARLERERGVPPPPGPPSEPVDWNFAQKELLEQQGIDIKLEMEKRLQDLENQYRKEKEEADLLLEQQRLYADSDSGDDSDKRSCEESWRLISSLREQLPPTTVQTIVKRCGLPSSGKRRAPRRVYQIPQRRRLQGKDPRWATMADLKMQAVKEICYEVALADFRHGRAEIEALAALKMRELCRTYGKPDGPGDAWRAVARDVWDTVGEEEGGGAGSGGGSEEGARGAEVEDLRAHIDKLTGILQEVKLQNSSKDRELQALRDRMLRMERVIPLAQDHEDENEEGGEVPWAPPEGSEAAEEAAPSDRMPSARPPSPPLSSWERVSRLMEEDPAFRRGRLRWLKQEQLRLQGLQGSGGRGGGLRRPPARFVPPHDCKLRFPFKSNPQHRESWPGMGSGEAPTPLQPPEEVTPHPATPARRPPSPRRSHHPRRNSLDGGGRSRGAGSAQPEPQHFQPKKHNSYPQPPQPYPAQRPPGPRYPPYTTPPRMRRQRSAPDLKESGAAV</sequence>
<proteinExistence type="evidence at protein level"/>
<dbReference type="EMBL" id="U91329">
    <property type="protein sequence ID" value="AAC52117.1"/>
    <property type="molecule type" value="mRNA"/>
</dbReference>
<dbReference type="EMBL" id="AB014606">
    <property type="protein sequence ID" value="BAA31681.2"/>
    <property type="status" value="ALT_INIT"/>
    <property type="molecule type" value="mRNA"/>
</dbReference>
<dbReference type="EMBL" id="CH471108">
    <property type="protein sequence ID" value="EAW90366.1"/>
    <property type="molecule type" value="Genomic_DNA"/>
</dbReference>
<dbReference type="EMBL" id="CH471108">
    <property type="protein sequence ID" value="EAW90367.1"/>
    <property type="molecule type" value="Genomic_DNA"/>
</dbReference>
<dbReference type="EMBL" id="CH471108">
    <property type="protein sequence ID" value="EAW90368.1"/>
    <property type="molecule type" value="Genomic_DNA"/>
</dbReference>
<dbReference type="EMBL" id="CH471108">
    <property type="protein sequence ID" value="EAW90369.1"/>
    <property type="molecule type" value="Genomic_DNA"/>
</dbReference>
<dbReference type="EMBL" id="BC034993">
    <property type="protein sequence ID" value="AAH34993.1"/>
    <property type="molecule type" value="mRNA"/>
</dbReference>
<dbReference type="CCDS" id="CCDS11065.1"/>
<dbReference type="RefSeq" id="NP_006603.2">
    <property type="nucleotide sequence ID" value="NM_006612.5"/>
</dbReference>
<dbReference type="RefSeq" id="XP_005256481.1">
    <property type="nucleotide sequence ID" value="XM_005256424.3"/>
</dbReference>
<dbReference type="RefSeq" id="XP_054170720.1">
    <property type="nucleotide sequence ID" value="XM_054314745.1"/>
</dbReference>
<dbReference type="PDB" id="2G1L">
    <property type="method" value="X-ray"/>
    <property type="resolution" value="2.60 A"/>
    <property type="chains" value="A=498-599"/>
</dbReference>
<dbReference type="PDB" id="9KO8">
    <property type="method" value="X-ray"/>
    <property type="resolution" value="3.00 A"/>
    <property type="chains" value="A/B=714-809"/>
</dbReference>
<dbReference type="PDBsum" id="2G1L"/>
<dbReference type="PDBsum" id="9KO8"/>
<dbReference type="EMDB" id="EMD-18303"/>
<dbReference type="SMR" id="O43896"/>
<dbReference type="BioGRID" id="115972">
    <property type="interactions" value="142"/>
</dbReference>
<dbReference type="DIP" id="DIP-40376N"/>
<dbReference type="FunCoup" id="O43896">
    <property type="interactions" value="467"/>
</dbReference>
<dbReference type="IntAct" id="O43896">
    <property type="interactions" value="87"/>
</dbReference>
<dbReference type="MINT" id="O43896"/>
<dbReference type="STRING" id="9606.ENSP00000320821"/>
<dbReference type="GlyGen" id="O43896">
    <property type="glycosylation" value="3 sites, 1 O-linked glycan (1 site)"/>
</dbReference>
<dbReference type="iPTMnet" id="O43896"/>
<dbReference type="MetOSite" id="O43896"/>
<dbReference type="PhosphoSitePlus" id="O43896"/>
<dbReference type="BioMuta" id="KIF1C"/>
<dbReference type="jPOST" id="O43896"/>
<dbReference type="MassIVE" id="O43896"/>
<dbReference type="PaxDb" id="9606-ENSP00000320821"/>
<dbReference type="PeptideAtlas" id="O43896"/>
<dbReference type="ProteomicsDB" id="49220"/>
<dbReference type="Pumba" id="O43896"/>
<dbReference type="Antibodypedia" id="11469">
    <property type="antibodies" value="153 antibodies from 29 providers"/>
</dbReference>
<dbReference type="DNASU" id="10749"/>
<dbReference type="Ensembl" id="ENST00000320785.10">
    <property type="protein sequence ID" value="ENSP00000320821.5"/>
    <property type="gene ID" value="ENSG00000129250.12"/>
</dbReference>
<dbReference type="GeneID" id="10749"/>
<dbReference type="KEGG" id="hsa:10749"/>
<dbReference type="MANE-Select" id="ENST00000320785.10">
    <property type="protein sequence ID" value="ENSP00000320821.5"/>
    <property type="RefSeq nucleotide sequence ID" value="NM_006612.6"/>
    <property type="RefSeq protein sequence ID" value="NP_006603.2"/>
</dbReference>
<dbReference type="UCSC" id="uc002gan.3">
    <property type="organism name" value="human"/>
</dbReference>
<dbReference type="AGR" id="HGNC:6317"/>
<dbReference type="CTD" id="10749"/>
<dbReference type="DisGeNET" id="10749"/>
<dbReference type="GeneCards" id="KIF1C"/>
<dbReference type="HGNC" id="HGNC:6317">
    <property type="gene designation" value="KIF1C"/>
</dbReference>
<dbReference type="HPA" id="ENSG00000129250">
    <property type="expression patterns" value="Group enriched (brain, heart muscle, skeletal muscle, tongue)"/>
</dbReference>
<dbReference type="MalaCards" id="KIF1C"/>
<dbReference type="MIM" id="603060">
    <property type="type" value="gene"/>
</dbReference>
<dbReference type="MIM" id="611302">
    <property type="type" value="phenotype"/>
</dbReference>
<dbReference type="neXtProt" id="NX_O43896"/>
<dbReference type="OpenTargets" id="ENSG00000129250"/>
<dbReference type="Orphanet" id="397946">
    <property type="disease" value="Autosomal spastic paraplegia type 58"/>
</dbReference>
<dbReference type="PharmGKB" id="PA30100"/>
<dbReference type="VEuPathDB" id="HostDB:ENSG00000129250"/>
<dbReference type="eggNOG" id="KOG0245">
    <property type="taxonomic scope" value="Eukaryota"/>
</dbReference>
<dbReference type="GeneTree" id="ENSGT00940000159295"/>
<dbReference type="HOGENOM" id="CLU_009645_0_0_1"/>
<dbReference type="InParanoid" id="O43896"/>
<dbReference type="OMA" id="TAFMVGE"/>
<dbReference type="OrthoDB" id="3176171at2759"/>
<dbReference type="PAN-GO" id="O43896">
    <property type="GO annotations" value="10 GO annotations based on evolutionary models"/>
</dbReference>
<dbReference type="PhylomeDB" id="O43896"/>
<dbReference type="TreeFam" id="TF105221"/>
<dbReference type="PathwayCommons" id="O43896"/>
<dbReference type="Reactome" id="R-HSA-6811434">
    <property type="pathway name" value="COPI-dependent Golgi-to-ER retrograde traffic"/>
</dbReference>
<dbReference type="Reactome" id="R-HSA-983189">
    <property type="pathway name" value="Kinesins"/>
</dbReference>
<dbReference type="SignaLink" id="O43896"/>
<dbReference type="SIGNOR" id="O43896"/>
<dbReference type="BioGRID-ORCS" id="10749">
    <property type="hits" value="10 hits in 1153 CRISPR screens"/>
</dbReference>
<dbReference type="ChiTaRS" id="KIF1C">
    <property type="organism name" value="human"/>
</dbReference>
<dbReference type="EvolutionaryTrace" id="O43896"/>
<dbReference type="GeneWiki" id="KIF1C"/>
<dbReference type="GenomeRNAi" id="10749"/>
<dbReference type="Pharos" id="O43896">
    <property type="development level" value="Tbio"/>
</dbReference>
<dbReference type="PRO" id="PR:O43896"/>
<dbReference type="Proteomes" id="UP000005640">
    <property type="component" value="Chromosome 17"/>
</dbReference>
<dbReference type="RNAct" id="O43896">
    <property type="molecule type" value="protein"/>
</dbReference>
<dbReference type="Bgee" id="ENSG00000129250">
    <property type="expression patterns" value="Expressed in C1 segment of cervical spinal cord and 205 other cell types or tissues"/>
</dbReference>
<dbReference type="ExpressionAtlas" id="O43896">
    <property type="expression patterns" value="baseline and differential"/>
</dbReference>
<dbReference type="GO" id="GO:0030424">
    <property type="term" value="C:axon"/>
    <property type="evidence" value="ECO:0000318"/>
    <property type="project" value="GO_Central"/>
</dbReference>
<dbReference type="GO" id="GO:1904115">
    <property type="term" value="C:axon cytoplasm"/>
    <property type="evidence" value="ECO:0007669"/>
    <property type="project" value="GOC"/>
</dbReference>
<dbReference type="GO" id="GO:0005737">
    <property type="term" value="C:cytoplasm"/>
    <property type="evidence" value="ECO:0000318"/>
    <property type="project" value="GO_Central"/>
</dbReference>
<dbReference type="GO" id="GO:0030425">
    <property type="term" value="C:dendrite"/>
    <property type="evidence" value="ECO:0000318"/>
    <property type="project" value="GO_Central"/>
</dbReference>
<dbReference type="GO" id="GO:0005783">
    <property type="term" value="C:endoplasmic reticulum"/>
    <property type="evidence" value="ECO:0000304"/>
    <property type="project" value="ProtInc"/>
</dbReference>
<dbReference type="GO" id="GO:0005794">
    <property type="term" value="C:Golgi apparatus"/>
    <property type="evidence" value="ECO:0000304"/>
    <property type="project" value="ProtInc"/>
</dbReference>
<dbReference type="GO" id="GO:0005871">
    <property type="term" value="C:kinesin complex"/>
    <property type="evidence" value="ECO:0000318"/>
    <property type="project" value="GO_Central"/>
</dbReference>
<dbReference type="GO" id="GO:0005874">
    <property type="term" value="C:microtubule"/>
    <property type="evidence" value="ECO:0000318"/>
    <property type="project" value="GO_Central"/>
</dbReference>
<dbReference type="GO" id="GO:0005524">
    <property type="term" value="F:ATP binding"/>
    <property type="evidence" value="ECO:0007669"/>
    <property type="project" value="UniProtKB-KW"/>
</dbReference>
<dbReference type="GO" id="GO:0016887">
    <property type="term" value="F:ATP hydrolysis activity"/>
    <property type="evidence" value="ECO:0000318"/>
    <property type="project" value="GO_Central"/>
</dbReference>
<dbReference type="GO" id="GO:0003774">
    <property type="term" value="F:cytoskeletal motor activity"/>
    <property type="evidence" value="ECO:0000304"/>
    <property type="project" value="ProtInc"/>
</dbReference>
<dbReference type="GO" id="GO:0008017">
    <property type="term" value="F:microtubule binding"/>
    <property type="evidence" value="ECO:0000318"/>
    <property type="project" value="GO_Central"/>
</dbReference>
<dbReference type="GO" id="GO:0008574">
    <property type="term" value="F:plus-end-directed microtubule motor activity"/>
    <property type="evidence" value="ECO:0000318"/>
    <property type="project" value="GO_Central"/>
</dbReference>
<dbReference type="GO" id="GO:0003723">
    <property type="term" value="F:RNA binding"/>
    <property type="evidence" value="ECO:0007005"/>
    <property type="project" value="UniProtKB"/>
</dbReference>
<dbReference type="GO" id="GO:1990048">
    <property type="term" value="P:anterograde neuronal dense core vesicle transport"/>
    <property type="evidence" value="ECO:0000250"/>
    <property type="project" value="ARUK-UCL"/>
</dbReference>
<dbReference type="GO" id="GO:1990049">
    <property type="term" value="P:retrograde neuronal dense core vesicle transport"/>
    <property type="evidence" value="ECO:0000250"/>
    <property type="project" value="ARUK-UCL"/>
</dbReference>
<dbReference type="GO" id="GO:0006890">
    <property type="term" value="P:retrograde vesicle-mediated transport, Golgi to endoplasmic reticulum"/>
    <property type="evidence" value="ECO:0000304"/>
    <property type="project" value="ProtInc"/>
</dbReference>
<dbReference type="GO" id="GO:0016192">
    <property type="term" value="P:vesicle-mediated transport"/>
    <property type="evidence" value="ECO:0000318"/>
    <property type="project" value="GO_Central"/>
</dbReference>
<dbReference type="CDD" id="cd22728">
    <property type="entry name" value="FHA_KIF1C"/>
    <property type="match status" value="1"/>
</dbReference>
<dbReference type="CDD" id="cd01365">
    <property type="entry name" value="KISc_KIF1A_KIF1B"/>
    <property type="match status" value="1"/>
</dbReference>
<dbReference type="FunFam" id="2.60.200.20:FF:000001">
    <property type="entry name" value="Kinesin family member 1B"/>
    <property type="match status" value="1"/>
</dbReference>
<dbReference type="FunFam" id="3.40.850.10:FF:000004">
    <property type="entry name" value="Kinesin-like protein isoform 2"/>
    <property type="match status" value="1"/>
</dbReference>
<dbReference type="Gene3D" id="2.60.200.20">
    <property type="match status" value="1"/>
</dbReference>
<dbReference type="Gene3D" id="6.10.250.2520">
    <property type="match status" value="1"/>
</dbReference>
<dbReference type="Gene3D" id="3.40.850.10">
    <property type="entry name" value="Kinesin motor domain"/>
    <property type="match status" value="1"/>
</dbReference>
<dbReference type="InterPro" id="IPR000253">
    <property type="entry name" value="FHA_dom"/>
</dbReference>
<dbReference type="InterPro" id="IPR032405">
    <property type="entry name" value="Kinesin_assoc"/>
</dbReference>
<dbReference type="InterPro" id="IPR019821">
    <property type="entry name" value="Kinesin_motor_CS"/>
</dbReference>
<dbReference type="InterPro" id="IPR001752">
    <property type="entry name" value="Kinesin_motor_dom"/>
</dbReference>
<dbReference type="InterPro" id="IPR036961">
    <property type="entry name" value="Kinesin_motor_dom_sf"/>
</dbReference>
<dbReference type="InterPro" id="IPR027417">
    <property type="entry name" value="P-loop_NTPase"/>
</dbReference>
<dbReference type="InterPro" id="IPR008984">
    <property type="entry name" value="SMAD_FHA_dom_sf"/>
</dbReference>
<dbReference type="PANTHER" id="PTHR47117:SF9">
    <property type="entry name" value="KINESIN-LIKE PROTEIN KIF1C ISOFORM X1"/>
    <property type="match status" value="1"/>
</dbReference>
<dbReference type="PANTHER" id="PTHR47117">
    <property type="entry name" value="STAR-RELATED LIPID TRANSFER PROTEIN 9"/>
    <property type="match status" value="1"/>
</dbReference>
<dbReference type="Pfam" id="PF00498">
    <property type="entry name" value="FHA"/>
    <property type="match status" value="1"/>
</dbReference>
<dbReference type="Pfam" id="PF00225">
    <property type="entry name" value="Kinesin"/>
    <property type="match status" value="1"/>
</dbReference>
<dbReference type="Pfam" id="PF16183">
    <property type="entry name" value="Kinesin_assoc"/>
    <property type="match status" value="1"/>
</dbReference>
<dbReference type="PRINTS" id="PR00380">
    <property type="entry name" value="KINESINHEAVY"/>
</dbReference>
<dbReference type="SMART" id="SM00129">
    <property type="entry name" value="KISc"/>
    <property type="match status" value="1"/>
</dbReference>
<dbReference type="SUPFAM" id="SSF52540">
    <property type="entry name" value="P-loop containing nucleoside triphosphate hydrolases"/>
    <property type="match status" value="1"/>
</dbReference>
<dbReference type="SUPFAM" id="SSF49879">
    <property type="entry name" value="SMAD/FHA domain"/>
    <property type="match status" value="1"/>
</dbReference>
<dbReference type="PROSITE" id="PS00411">
    <property type="entry name" value="KINESIN_MOTOR_1"/>
    <property type="match status" value="1"/>
</dbReference>
<dbReference type="PROSITE" id="PS50067">
    <property type="entry name" value="KINESIN_MOTOR_2"/>
    <property type="match status" value="1"/>
</dbReference>
<comment type="function">
    <text evidence="6">Motor required for the retrograde transport of Golgi vesicles to the endoplasmic reticulum. Has a microtubule plus end-directed motility.</text>
</comment>
<comment type="subunit">
    <text evidence="5 7">Monomer. Interacts with BICD2.</text>
</comment>
<comment type="interaction">
    <interactant intactId="EBI-1644048">
        <id>O43896</id>
    </interactant>
    <interactant intactId="EBI-356498">
        <id>P62258</id>
        <label>YWHAE</label>
    </interactant>
    <organismsDiffer>false</organismsDiffer>
    <experiments>6</experiments>
</comment>
<comment type="interaction">
    <interactant intactId="EBI-1644048">
        <id>O43896</id>
    </interactant>
    <interactant intactId="EBI-359832">
        <id>P61981</id>
        <label>YWHAG</label>
    </interactant>
    <organismsDiffer>false</organismsDiffer>
    <experiments>7</experiments>
</comment>
<comment type="interaction">
    <interactant intactId="EBI-1644048">
        <id>O43896</id>
    </interactant>
    <interactant intactId="EBI-359854">
        <id>P27348</id>
        <label>YWHAQ</label>
    </interactant>
    <organismsDiffer>false</organismsDiffer>
    <experiments>5</experiments>
</comment>
<comment type="interaction">
    <interactant intactId="EBI-1644048">
        <id>O43896</id>
    </interactant>
    <interactant intactId="EBI-347088">
        <id>P63104</id>
        <label>YWHAZ</label>
    </interactant>
    <organismsDiffer>false</organismsDiffer>
    <experiments>4</experiments>
</comment>
<comment type="interaction">
    <interactant intactId="EBI-1644048">
        <id>O43896</id>
    </interactant>
    <interactant intactId="EBI-7893170">
        <id>A0JNT9</id>
        <label>Bicdl1</label>
    </interactant>
    <organismsDiffer>true</organismsDiffer>
    <experiments>3</experiments>
</comment>
<comment type="subcellular location">
    <subcellularLocation>
        <location evidence="7">Cytoplasm</location>
        <location evidence="7">Cytoskeleton</location>
    </subcellularLocation>
</comment>
<comment type="tissue specificity">
    <text evidence="6">Expressed in all tissues examined, with most abundant expression in heart and skeletal muscle.</text>
</comment>
<comment type="PTM">
    <text evidence="6">Phosphorylated on tyrosine residues.</text>
</comment>
<comment type="disease" evidence="4 5">
    <disease id="DI-04016">
        <name>Spastic ataxia 2, autosomal recessive</name>
        <acronym>SPAX2</acronym>
        <description>A neurologic disorder characterized by cerebellar ataxia, dysarthria, and variable spasticity of the lower limbs. Cognition is not affected.</description>
        <dbReference type="MIM" id="611302"/>
    </disease>
    <text>The disease is caused by variants affecting the gene represented in this entry.</text>
</comment>
<comment type="similarity">
    <text evidence="2">Belongs to the TRAFAC class myosin-kinesin ATPase superfamily. Kinesin family. Unc-104 subfamily.</text>
</comment>
<comment type="sequence caution" evidence="7">
    <conflict type="erroneous initiation">
        <sequence resource="EMBL-CDS" id="BAA31681"/>
    </conflict>
</comment>
<organism>
    <name type="scientific">Homo sapiens</name>
    <name type="common">Human</name>
    <dbReference type="NCBI Taxonomy" id="9606"/>
    <lineage>
        <taxon>Eukaryota</taxon>
        <taxon>Metazoa</taxon>
        <taxon>Chordata</taxon>
        <taxon>Craniata</taxon>
        <taxon>Vertebrata</taxon>
        <taxon>Euteleostomi</taxon>
        <taxon>Mammalia</taxon>
        <taxon>Eutheria</taxon>
        <taxon>Euarchontoglires</taxon>
        <taxon>Primates</taxon>
        <taxon>Haplorrhini</taxon>
        <taxon>Catarrhini</taxon>
        <taxon>Hominidae</taxon>
        <taxon>Homo</taxon>
    </lineage>
</organism>
<evidence type="ECO:0000255" key="1"/>
<evidence type="ECO:0000255" key="2">
    <source>
        <dbReference type="PROSITE-ProRule" id="PRU00283"/>
    </source>
</evidence>
<evidence type="ECO:0000256" key="3">
    <source>
        <dbReference type="SAM" id="MobiDB-lite"/>
    </source>
</evidence>
<evidence type="ECO:0000269" key="4">
    <source>
    </source>
</evidence>
<evidence type="ECO:0000269" key="5">
    <source>
    </source>
</evidence>
<evidence type="ECO:0000269" key="6">
    <source>
    </source>
</evidence>
<evidence type="ECO:0000305" key="7"/>
<evidence type="ECO:0007744" key="8">
    <source>
    </source>
</evidence>
<evidence type="ECO:0007744" key="9">
    <source>
    </source>
</evidence>
<evidence type="ECO:0007744" key="10">
    <source>
    </source>
</evidence>
<evidence type="ECO:0007744" key="11">
    <source>
    </source>
</evidence>
<evidence type="ECO:0007744" key="12">
    <source>
    </source>
</evidence>
<evidence type="ECO:0007744" key="13">
    <source>
    </source>
</evidence>
<evidence type="ECO:0007744" key="14">
    <source>
    </source>
</evidence>
<evidence type="ECO:0007744" key="15">
    <source>
    </source>
</evidence>
<evidence type="ECO:0007744" key="16">
    <source>
    </source>
</evidence>
<evidence type="ECO:0007829" key="17">
    <source>
        <dbReference type="PDB" id="2G1L"/>
    </source>
</evidence>
<keyword id="KW-0002">3D-structure</keyword>
<keyword id="KW-0067">ATP-binding</keyword>
<keyword id="KW-0175">Coiled coil</keyword>
<keyword id="KW-0963">Cytoplasm</keyword>
<keyword id="KW-0206">Cytoskeleton</keyword>
<keyword id="KW-0225">Disease variant</keyword>
<keyword id="KW-0488">Methylation</keyword>
<keyword id="KW-0493">Microtubule</keyword>
<keyword id="KW-0505">Motor protein</keyword>
<keyword id="KW-0523">Neurodegeneration</keyword>
<keyword id="KW-0547">Nucleotide-binding</keyword>
<keyword id="KW-0597">Phosphoprotein</keyword>
<keyword id="KW-1267">Proteomics identification</keyword>
<keyword id="KW-1185">Reference proteome</keyword>